<dbReference type="EC" id="3.2.1.67"/>
<dbReference type="EMBL" id="EQ963472">
    <property type="protein sequence ID" value="EED57938.1"/>
    <property type="molecule type" value="Genomic_DNA"/>
</dbReference>
<dbReference type="RefSeq" id="XP_002373550.1">
    <property type="nucleotide sequence ID" value="XM_002373509.1"/>
</dbReference>
<dbReference type="SMR" id="B8MZZ6"/>
<dbReference type="STRING" id="332952.B8MZZ6"/>
<dbReference type="GlyCosmos" id="B8MZZ6">
    <property type="glycosylation" value="10 sites, No reported glycans"/>
</dbReference>
<dbReference type="EnsemblFungi" id="EED57938">
    <property type="protein sequence ID" value="EED57938"/>
    <property type="gene ID" value="AFLA_086360"/>
</dbReference>
<dbReference type="VEuPathDB" id="FungiDB:AFLA_004220"/>
<dbReference type="eggNOG" id="ENOG502SI66">
    <property type="taxonomic scope" value="Eukaryota"/>
</dbReference>
<dbReference type="HOGENOM" id="CLU_016031_1_2_1"/>
<dbReference type="OMA" id="RNSYCEG"/>
<dbReference type="GO" id="GO:0005576">
    <property type="term" value="C:extracellular region"/>
    <property type="evidence" value="ECO:0000250"/>
    <property type="project" value="UniProtKB"/>
</dbReference>
<dbReference type="GO" id="GO:0047911">
    <property type="term" value="F:galacturan 1,4-alpha-galacturonidase activity"/>
    <property type="evidence" value="ECO:0007669"/>
    <property type="project" value="UniProtKB-EC"/>
</dbReference>
<dbReference type="GO" id="GO:0004650">
    <property type="term" value="F:polygalacturonase activity"/>
    <property type="evidence" value="ECO:0000250"/>
    <property type="project" value="UniProtKB"/>
</dbReference>
<dbReference type="GO" id="GO:0071555">
    <property type="term" value="P:cell wall organization"/>
    <property type="evidence" value="ECO:0007669"/>
    <property type="project" value="UniProtKB-KW"/>
</dbReference>
<dbReference type="GO" id="GO:0045490">
    <property type="term" value="P:pectin catabolic process"/>
    <property type="evidence" value="ECO:0000250"/>
    <property type="project" value="UniProtKB"/>
</dbReference>
<dbReference type="FunFam" id="2.160.20.10:FF:000037">
    <property type="entry name" value="Probable exopolygalacturonase C"/>
    <property type="match status" value="1"/>
</dbReference>
<dbReference type="Gene3D" id="2.160.20.10">
    <property type="entry name" value="Single-stranded right-handed beta-helix, Pectin lyase-like"/>
    <property type="match status" value="1"/>
</dbReference>
<dbReference type="InterPro" id="IPR000743">
    <property type="entry name" value="Glyco_hydro_28"/>
</dbReference>
<dbReference type="InterPro" id="IPR012334">
    <property type="entry name" value="Pectin_lyas_fold"/>
</dbReference>
<dbReference type="InterPro" id="IPR011050">
    <property type="entry name" value="Pectin_lyase_fold/virulence"/>
</dbReference>
<dbReference type="PANTHER" id="PTHR31736">
    <property type="match status" value="1"/>
</dbReference>
<dbReference type="PANTHER" id="PTHR31736:SF11">
    <property type="entry name" value="EXOPOLYGALACTURONASE C-RELATED"/>
    <property type="match status" value="1"/>
</dbReference>
<dbReference type="Pfam" id="PF00295">
    <property type="entry name" value="Glyco_hydro_28"/>
    <property type="match status" value="1"/>
</dbReference>
<dbReference type="SUPFAM" id="SSF51126">
    <property type="entry name" value="Pectin lyase-like"/>
    <property type="match status" value="1"/>
</dbReference>
<protein>
    <recommendedName>
        <fullName>Probable exopolygalacturonase C</fullName>
        <ecNumber>3.2.1.67</ecNumber>
    </recommendedName>
    <alternativeName>
        <fullName>Galacturan 1,4-alpha-galacturonidase C</fullName>
    </alternativeName>
    <alternativeName>
        <fullName>Poly(1,4-alpha-D-galacturonide)galacturonohydrolase C</fullName>
    </alternativeName>
</protein>
<organism>
    <name type="scientific">Aspergillus flavus (strain ATCC 200026 / FGSC A1120 / IAM 13836 / NRRL 3357 / JCM 12722 / SRRC 167)</name>
    <dbReference type="NCBI Taxonomy" id="332952"/>
    <lineage>
        <taxon>Eukaryota</taxon>
        <taxon>Fungi</taxon>
        <taxon>Dikarya</taxon>
        <taxon>Ascomycota</taxon>
        <taxon>Pezizomycotina</taxon>
        <taxon>Eurotiomycetes</taxon>
        <taxon>Eurotiomycetidae</taxon>
        <taxon>Eurotiales</taxon>
        <taxon>Aspergillaceae</taxon>
        <taxon>Aspergillus</taxon>
        <taxon>Aspergillus subgen. Circumdati</taxon>
    </lineage>
</organism>
<feature type="signal peptide" evidence="2">
    <location>
        <begin position="1"/>
        <end position="21"/>
    </location>
</feature>
<feature type="chain" id="PRO_0000393684" description="Probable exopolygalacturonase C">
    <location>
        <begin position="22"/>
        <end position="437"/>
    </location>
</feature>
<feature type="repeat" description="PbH1 1">
    <location>
        <begin position="215"/>
        <end position="236"/>
    </location>
</feature>
<feature type="repeat" description="PbH1 2">
    <location>
        <begin position="238"/>
        <end position="259"/>
    </location>
</feature>
<feature type="repeat" description="PbH1 3">
    <location>
        <begin position="270"/>
        <end position="291"/>
    </location>
</feature>
<feature type="repeat" description="PbH1 4">
    <location>
        <begin position="299"/>
        <end position="320"/>
    </location>
</feature>
<feature type="active site" description="Proton donor" evidence="1">
    <location>
        <position position="229"/>
    </location>
</feature>
<feature type="active site" evidence="1">
    <location>
        <position position="253"/>
    </location>
</feature>
<feature type="glycosylation site" description="N-linked (GlcNAc...) asparagine" evidence="2">
    <location>
        <position position="25"/>
    </location>
</feature>
<feature type="glycosylation site" description="N-linked (GlcNAc...) asparagine" evidence="2">
    <location>
        <position position="42"/>
    </location>
</feature>
<feature type="glycosylation site" description="N-linked (GlcNAc...) asparagine" evidence="2">
    <location>
        <position position="82"/>
    </location>
</feature>
<feature type="glycosylation site" description="N-linked (GlcNAc...) asparagine" evidence="2">
    <location>
        <position position="99"/>
    </location>
</feature>
<feature type="glycosylation site" description="N-linked (GlcNAc...) asparagine" evidence="2">
    <location>
        <position position="149"/>
    </location>
</feature>
<feature type="glycosylation site" description="N-linked (GlcNAc...) asparagine" evidence="2">
    <location>
        <position position="269"/>
    </location>
</feature>
<feature type="glycosylation site" description="N-linked (GlcNAc...) asparagine" evidence="2">
    <location>
        <position position="301"/>
    </location>
</feature>
<feature type="glycosylation site" description="N-linked (GlcNAc...) asparagine" evidence="2">
    <location>
        <position position="311"/>
    </location>
</feature>
<feature type="glycosylation site" description="N-linked (GlcNAc...) asparagine" evidence="2">
    <location>
        <position position="428"/>
    </location>
</feature>
<feature type="glycosylation site" description="N-linked (GlcNAc...) asparagine" evidence="2">
    <location>
        <position position="431"/>
    </location>
</feature>
<feature type="disulfide bond" evidence="1">
    <location>
        <begin position="386"/>
        <end position="392"/>
    </location>
</feature>
<evidence type="ECO:0000250" key="1"/>
<evidence type="ECO:0000255" key="2"/>
<evidence type="ECO:0000305" key="3"/>
<keyword id="KW-0961">Cell wall biogenesis/degradation</keyword>
<keyword id="KW-1015">Disulfide bond</keyword>
<keyword id="KW-0325">Glycoprotein</keyword>
<keyword id="KW-0326">Glycosidase</keyword>
<keyword id="KW-0378">Hydrolase</keyword>
<keyword id="KW-0677">Repeat</keyword>
<keyword id="KW-0964">Secreted</keyword>
<keyword id="KW-0732">Signal</keyword>
<gene>
    <name type="primary">pgxC</name>
    <name type="ORF">AFLA_086360</name>
</gene>
<name>PGXC_ASPFN</name>
<sequence length="437" mass="47626">MLITKTAFLAFLLSSVPLAHGAGGNSSSPDARGRRCVVRSSNGTADDSPEVSRVFAQCATNSVIVFQEGVDYNIFQPIKATNLSNVEIQMHGNLHLPQNISAVRDIVNAGTSTWFTLEGPRVDWTGPEDVNNGWIKSYGQAWWDANPPNGTGISGRPHLMSYKTSQATIKYFRSGKPIAWNMKLHGEDIAVSHAIVDASSTGSFPFNTDAFDVQGTNIRISDSIMYNGDDAIAVGSDSHNIVFERNTIGYQSHGMSIGSLGKDASAFANITNLRFEDVTVIDALYAARFKSWTGGQGLVKNVTWKNIRVYNVTFPIFVTQSYYDQSVSRDGVDTESSVMMEDFTWEDFSGSINSYQPGDGSCATDPCWYNAGLPNLKHTEALVIECNTDKSCKNFVTKNIQLYPQVLEPASVICMKATAELNPNLGFNCSNGTFTSA</sequence>
<reference key="1">
    <citation type="journal article" date="2015" name="Genome Announc.">
        <title>Genome sequence of Aspergillus flavus NRRL 3357, a strain that causes aflatoxin contamination of food and feed.</title>
        <authorList>
            <person name="Nierman W.C."/>
            <person name="Yu J."/>
            <person name="Fedorova-Abrams N.D."/>
            <person name="Losada L."/>
            <person name="Cleveland T.E."/>
            <person name="Bhatnagar D."/>
            <person name="Bennett J.W."/>
            <person name="Dean R."/>
            <person name="Payne G.A."/>
        </authorList>
    </citation>
    <scope>NUCLEOTIDE SEQUENCE [LARGE SCALE GENOMIC DNA]</scope>
    <source>
        <strain>ATCC 200026 / FGSC A1120 / IAM 13836 / NRRL 3357 / JCM 12722 / SRRC 167</strain>
    </source>
</reference>
<comment type="function">
    <text evidence="1">Specific in hydrolyzing the terminal glycosidic bond of polygalacturonic acid and oligogalacturonates.</text>
</comment>
<comment type="catalytic activity">
    <reaction>
        <text>[(1-&gt;4)-alpha-D-galacturonosyl](n) + H2O = alpha-D-galacturonate + [(1-&gt;4)-alpha-D-galacturonosyl](n-1)</text>
        <dbReference type="Rhea" id="RHEA:14117"/>
        <dbReference type="Rhea" id="RHEA-COMP:14570"/>
        <dbReference type="Rhea" id="RHEA-COMP:14572"/>
        <dbReference type="ChEBI" id="CHEBI:15377"/>
        <dbReference type="ChEBI" id="CHEBI:58658"/>
        <dbReference type="ChEBI" id="CHEBI:140523"/>
        <dbReference type="EC" id="3.2.1.67"/>
    </reaction>
</comment>
<comment type="subcellular location">
    <subcellularLocation>
        <location evidence="1">Secreted</location>
    </subcellularLocation>
</comment>
<comment type="similarity">
    <text evidence="3">Belongs to the glycosyl hydrolase 28 family.</text>
</comment>
<accession>B8MZZ6</accession>
<proteinExistence type="inferred from homology"/>